<organismHost>
    <name type="scientific">Catharanthus roseus</name>
    <name type="common">Madagascar periwinkle</name>
    <name type="synonym">Vinca rosea</name>
    <dbReference type="NCBI Taxonomy" id="4058"/>
</organismHost>
<organismHost>
    <name type="scientific">Melilotus officinalis</name>
    <name type="common">Yellow sweet clover</name>
    <name type="synonym">Trifolium officinale</name>
    <dbReference type="NCBI Taxonomy" id="47083"/>
</organismHost>
<organismHost>
    <name type="scientific">Trifolium incarnatum</name>
    <name type="common">Crimson clover</name>
    <dbReference type="NCBI Taxonomy" id="60916"/>
</organismHost>
<sequence length="427" mass="48065">MSRQNWVETSALVECISEYIVRSYGDTFIGLTSTDLSTLSNLLSNLSIANVGFLNDLRTPLQNMSNEFVDFLSTTDRCGFMLRPIWFDSDINPAVTDNFVNSYIKLRNSVPVSDVIRQVNNLSLHNDVVLKIYSVQNAIIRALDPPYGTKVDPTNLFRATALKPSNYGQRRSLCTQLGAGVEAVDFFVSERGRMVFGRRSPNALQAAQYDINVPNFWSVLDVTNARVYFTNTFLGCTITNVQVNAQNGQNPVAFIRVNTDQNDINVDSDAIVSFSLAGGVINVTTAVPMTGFAIAIEGDFHFQMNRCQSYYTGVSITLGAQVPIDDFGIMKHLEIFRMRLLACGQAEMFAESMNRLTMQLIANYTQDNFNPNAVAFATPWYRISERFGVILSFIDQNINLQTRRLMVRHLWVIYSFIAVFGRYYNIN</sequence>
<organism>
    <name type="scientific">Wound tumor virus</name>
    <name type="common">WTV</name>
    <dbReference type="NCBI Taxonomy" id="10987"/>
    <lineage>
        <taxon>Viruses</taxon>
        <taxon>Riboviria</taxon>
        <taxon>Orthornavirae</taxon>
        <taxon>Duplornaviricota</taxon>
        <taxon>Resentoviricetes</taxon>
        <taxon>Reovirales</taxon>
        <taxon>Sedoreoviridae</taxon>
        <taxon>Phytoreovirus</taxon>
    </lineage>
</organism>
<proteinExistence type="inferred from homology"/>
<comment type="function">
    <text>Capsid protein which self-assembles to form the outer icosahedral capsid with a T=13 symmetry, about 70 nm in diameter and consisting of 780 molecules capsid proteins.</text>
</comment>
<comment type="subunit">
    <text evidence="1">Homotrimer. Homomultimer.</text>
</comment>
<comment type="subcellular location">
    <subcellularLocation>
        <location evidence="2">Virion</location>
    </subcellularLocation>
    <subcellularLocation>
        <location evidence="1">Host cytoplasm</location>
    </subcellularLocation>
    <text evidence="1">Found in the peripheral regions of spherical cytoplasmic structures, called virus factories, that appear early after infection and are the site of viral replication and packaging.</text>
</comment>
<comment type="similarity">
    <text evidence="2">Belongs to the phytoreovirus outer capsid protein P8 family.</text>
</comment>
<evidence type="ECO:0000250" key="1"/>
<evidence type="ECO:0000305" key="2"/>
<dbReference type="EMBL" id="J04344">
    <property type="protein sequence ID" value="AAA48503.1"/>
    <property type="molecule type" value="Genomic_RNA"/>
</dbReference>
<dbReference type="PIR" id="A30231">
    <property type="entry name" value="MWXRWV"/>
</dbReference>
<dbReference type="RefSeq" id="YP_009508277.1">
    <property type="nucleotide sequence ID" value="NC_038949.1"/>
</dbReference>
<dbReference type="SMR" id="P17380"/>
<dbReference type="GeneID" id="37619686"/>
<dbReference type="OrthoDB" id="9520at10239"/>
<dbReference type="Proteomes" id="UP000242823">
    <property type="component" value="Genome"/>
</dbReference>
<dbReference type="GO" id="GO:0030430">
    <property type="term" value="C:host cell cytoplasm"/>
    <property type="evidence" value="ECO:0007669"/>
    <property type="project" value="UniProtKB-SubCell"/>
</dbReference>
<dbReference type="GO" id="GO:0019031">
    <property type="term" value="C:viral envelope"/>
    <property type="evidence" value="ECO:0007669"/>
    <property type="project" value="InterPro"/>
</dbReference>
<dbReference type="GO" id="GO:0039624">
    <property type="term" value="C:viral outer capsid"/>
    <property type="evidence" value="ECO:0007669"/>
    <property type="project" value="UniProtKB-KW"/>
</dbReference>
<dbReference type="GO" id="GO:0046789">
    <property type="term" value="F:host cell surface receptor binding"/>
    <property type="evidence" value="ECO:0007669"/>
    <property type="project" value="InterPro"/>
</dbReference>
<dbReference type="GO" id="GO:0005198">
    <property type="term" value="F:structural molecule activity"/>
    <property type="evidence" value="ECO:0007669"/>
    <property type="project" value="InterPro"/>
</dbReference>
<dbReference type="GO" id="GO:0019064">
    <property type="term" value="P:fusion of virus membrane with host plasma membrane"/>
    <property type="evidence" value="ECO:0007669"/>
    <property type="project" value="InterPro"/>
</dbReference>
<dbReference type="Gene3D" id="2.60.120.170">
    <property type="match status" value="1"/>
</dbReference>
<dbReference type="InterPro" id="IPR008980">
    <property type="entry name" value="Capsid_hemagglutn"/>
</dbReference>
<dbReference type="InterPro" id="IPR009807">
    <property type="entry name" value="Phytoreo_P8"/>
</dbReference>
<dbReference type="InterPro" id="IPR008935">
    <property type="entry name" value="Virus_capsid_a-hlx_vir"/>
</dbReference>
<dbReference type="Pfam" id="PF07124">
    <property type="entry name" value="Phytoreo_P8"/>
    <property type="match status" value="1"/>
</dbReference>
<dbReference type="SUPFAM" id="SSF48345">
    <property type="entry name" value="A virus capsid protein alpha-helical domain"/>
    <property type="match status" value="1"/>
</dbReference>
<dbReference type="SUPFAM" id="SSF49818">
    <property type="entry name" value="Viral protein domain"/>
    <property type="match status" value="1"/>
</dbReference>
<keyword id="KW-0167">Capsid protein</keyword>
<keyword id="KW-1035">Host cytoplasm</keyword>
<keyword id="KW-1152">Outer capsid protein</keyword>
<keyword id="KW-0946">Virion</keyword>
<feature type="chain" id="PRO_0000222767" description="Outer capsid protein P8">
    <location>
        <begin position="1"/>
        <end position="427"/>
    </location>
</feature>
<reference key="1">
    <citation type="journal article" date="1989" name="Virology">
        <title>The 3'-terminal sequence of a wound tumor virus transcript can influence conformational and functional properties associated with the 5'-terminus.</title>
        <authorList>
            <person name="Xu Z."/>
            <person name="Anzola J.V."/>
            <person name="Nalin C.M."/>
            <person name="Nuss D.L."/>
        </authorList>
    </citation>
    <scope>NUCLEOTIDE SEQUENCE [GENOMIC RNA]</scope>
</reference>
<protein>
    <recommendedName>
        <fullName>Outer capsid protein P8</fullName>
    </recommendedName>
    <alternativeName>
        <fullName>Structural protein P8</fullName>
    </alternativeName>
</protein>
<accession>P17380</accession>
<name>P8_WTV</name>